<evidence type="ECO:0000250" key="1"/>
<evidence type="ECO:0000250" key="2">
    <source>
        <dbReference type="UniProtKB" id="P52630"/>
    </source>
</evidence>
<evidence type="ECO:0000255" key="3">
    <source>
        <dbReference type="PROSITE-ProRule" id="PRU00191"/>
    </source>
</evidence>
<evidence type="ECO:0000269" key="4">
    <source>
    </source>
</evidence>
<evidence type="ECO:0000305" key="5"/>
<dbReference type="EMBL" id="AB004061">
    <property type="protein sequence ID" value="BAA20332.1"/>
    <property type="molecule type" value="mRNA"/>
</dbReference>
<dbReference type="RefSeq" id="NP_999054.1">
    <property type="nucleotide sequence ID" value="NM_213889.1"/>
</dbReference>
<dbReference type="SMR" id="O02799"/>
<dbReference type="FunCoup" id="O02799">
    <property type="interactions" value="484"/>
</dbReference>
<dbReference type="STRING" id="9823.ENSSSCP00000069374"/>
<dbReference type="PaxDb" id="9823-ENSSSCP00000000422"/>
<dbReference type="PeptideAtlas" id="O02799"/>
<dbReference type="Ensembl" id="ENSSSCT00000000428.4">
    <property type="protein sequence ID" value="ENSSSCP00000000422.3"/>
    <property type="gene ID" value="ENSSSCG00000000396.5"/>
</dbReference>
<dbReference type="GeneID" id="396923"/>
<dbReference type="KEGG" id="ssc:396923"/>
<dbReference type="CTD" id="6773"/>
<dbReference type="VGNC" id="VGNC:93539">
    <property type="gene designation" value="STAT2"/>
</dbReference>
<dbReference type="eggNOG" id="KOG3667">
    <property type="taxonomic scope" value="Eukaryota"/>
</dbReference>
<dbReference type="GeneTree" id="ENSGT01050000244905"/>
<dbReference type="InParanoid" id="O02799"/>
<dbReference type="OMA" id="HQDDDRV"/>
<dbReference type="OrthoDB" id="19300at2759"/>
<dbReference type="Reactome" id="R-SSC-8854691">
    <property type="pathway name" value="Interleukin-20 family signaling"/>
</dbReference>
<dbReference type="Reactome" id="R-SSC-909733">
    <property type="pathway name" value="Interferon alpha/beta signaling"/>
</dbReference>
<dbReference type="Reactome" id="R-SSC-912694">
    <property type="pathway name" value="Regulation of IFNA/IFNB signaling"/>
</dbReference>
<dbReference type="Proteomes" id="UP000008227">
    <property type="component" value="Chromosome 5"/>
</dbReference>
<dbReference type="Proteomes" id="UP000314985">
    <property type="component" value="Unplaced"/>
</dbReference>
<dbReference type="Proteomes" id="UP000694570">
    <property type="component" value="Unplaced"/>
</dbReference>
<dbReference type="Proteomes" id="UP000694571">
    <property type="component" value="Unplaced"/>
</dbReference>
<dbReference type="Proteomes" id="UP000694720">
    <property type="component" value="Unplaced"/>
</dbReference>
<dbReference type="Proteomes" id="UP000694722">
    <property type="component" value="Unplaced"/>
</dbReference>
<dbReference type="Proteomes" id="UP000694723">
    <property type="component" value="Unplaced"/>
</dbReference>
<dbReference type="Proteomes" id="UP000694724">
    <property type="component" value="Unplaced"/>
</dbReference>
<dbReference type="Proteomes" id="UP000694725">
    <property type="component" value="Unplaced"/>
</dbReference>
<dbReference type="Proteomes" id="UP000694726">
    <property type="component" value="Unplaced"/>
</dbReference>
<dbReference type="Proteomes" id="UP000694727">
    <property type="component" value="Unplaced"/>
</dbReference>
<dbReference type="Proteomes" id="UP000694728">
    <property type="component" value="Unplaced"/>
</dbReference>
<dbReference type="Bgee" id="ENSSSCG00000000396">
    <property type="expression patterns" value="Expressed in blood and 40 other cell types or tissues"/>
</dbReference>
<dbReference type="ExpressionAtlas" id="O02799">
    <property type="expression patterns" value="baseline and differential"/>
</dbReference>
<dbReference type="GO" id="GO:0005737">
    <property type="term" value="C:cytoplasm"/>
    <property type="evidence" value="ECO:0000318"/>
    <property type="project" value="GO_Central"/>
</dbReference>
<dbReference type="GO" id="GO:0005829">
    <property type="term" value="C:cytosol"/>
    <property type="evidence" value="ECO:0007669"/>
    <property type="project" value="Ensembl"/>
</dbReference>
<dbReference type="GO" id="GO:0070721">
    <property type="term" value="C:ISGF3 complex"/>
    <property type="evidence" value="ECO:0000318"/>
    <property type="project" value="GO_Central"/>
</dbReference>
<dbReference type="GO" id="GO:0005634">
    <property type="term" value="C:nucleus"/>
    <property type="evidence" value="ECO:0000318"/>
    <property type="project" value="GO_Central"/>
</dbReference>
<dbReference type="GO" id="GO:0005886">
    <property type="term" value="C:plasma membrane"/>
    <property type="evidence" value="ECO:0007669"/>
    <property type="project" value="Ensembl"/>
</dbReference>
<dbReference type="GO" id="GO:0000981">
    <property type="term" value="F:DNA-binding transcription factor activity, RNA polymerase II-specific"/>
    <property type="evidence" value="ECO:0000318"/>
    <property type="project" value="GO_Central"/>
</dbReference>
<dbReference type="GO" id="GO:0042802">
    <property type="term" value="F:identical protein binding"/>
    <property type="evidence" value="ECO:0007669"/>
    <property type="project" value="Ensembl"/>
</dbReference>
<dbReference type="GO" id="GO:0000978">
    <property type="term" value="F:RNA polymerase II cis-regulatory region sequence-specific DNA binding"/>
    <property type="evidence" value="ECO:0000318"/>
    <property type="project" value="GO_Central"/>
</dbReference>
<dbReference type="GO" id="GO:0044389">
    <property type="term" value="F:ubiquitin-like protein ligase binding"/>
    <property type="evidence" value="ECO:0007669"/>
    <property type="project" value="Ensembl"/>
</dbReference>
<dbReference type="GO" id="GO:0007259">
    <property type="term" value="P:cell surface receptor signaling pathway via JAK-STAT"/>
    <property type="evidence" value="ECO:0000318"/>
    <property type="project" value="GO_Central"/>
</dbReference>
<dbReference type="GO" id="GO:0006952">
    <property type="term" value="P:defense response"/>
    <property type="evidence" value="ECO:0000318"/>
    <property type="project" value="GO_Central"/>
</dbReference>
<dbReference type="GO" id="GO:0051607">
    <property type="term" value="P:defense response to virus"/>
    <property type="evidence" value="ECO:0000250"/>
    <property type="project" value="UniProtKB"/>
</dbReference>
<dbReference type="GO" id="GO:0060339">
    <property type="term" value="P:negative regulation of type I interferon-mediated signaling pathway"/>
    <property type="evidence" value="ECO:0007669"/>
    <property type="project" value="Ensembl"/>
</dbReference>
<dbReference type="GO" id="GO:0045944">
    <property type="term" value="P:positive regulation of transcription by RNA polymerase II"/>
    <property type="evidence" value="ECO:0007669"/>
    <property type="project" value="Ensembl"/>
</dbReference>
<dbReference type="GO" id="GO:0042127">
    <property type="term" value="P:regulation of cell population proliferation"/>
    <property type="evidence" value="ECO:0000318"/>
    <property type="project" value="GO_Central"/>
</dbReference>
<dbReference type="GO" id="GO:0090140">
    <property type="term" value="P:regulation of mitochondrial fission"/>
    <property type="evidence" value="ECO:0000250"/>
    <property type="project" value="UniProtKB"/>
</dbReference>
<dbReference type="GO" id="GO:0001932">
    <property type="term" value="P:regulation of protein phosphorylation"/>
    <property type="evidence" value="ECO:0000250"/>
    <property type="project" value="UniProtKB"/>
</dbReference>
<dbReference type="GO" id="GO:0006357">
    <property type="term" value="P:regulation of transcription by RNA polymerase II"/>
    <property type="evidence" value="ECO:0000318"/>
    <property type="project" value="GO_Central"/>
</dbReference>
<dbReference type="GO" id="GO:0043434">
    <property type="term" value="P:response to peptide hormone"/>
    <property type="evidence" value="ECO:0000318"/>
    <property type="project" value="GO_Central"/>
</dbReference>
<dbReference type="GO" id="GO:0060337">
    <property type="term" value="P:type I interferon-mediated signaling pathway"/>
    <property type="evidence" value="ECO:0000250"/>
    <property type="project" value="UniProtKB"/>
</dbReference>
<dbReference type="CDD" id="cd10373">
    <property type="entry name" value="SH2_STAT2"/>
    <property type="match status" value="1"/>
</dbReference>
<dbReference type="CDD" id="cd16846">
    <property type="entry name" value="STAT2_DBD"/>
    <property type="match status" value="1"/>
</dbReference>
<dbReference type="FunFam" id="1.10.238.10:FF:000012">
    <property type="entry name" value="Signal transducer and activator of transcription"/>
    <property type="match status" value="1"/>
</dbReference>
<dbReference type="FunFam" id="1.10.532.10:FF:000003">
    <property type="entry name" value="Signal transducer and activator of transcription"/>
    <property type="match status" value="1"/>
</dbReference>
<dbReference type="FunFam" id="1.20.1050.20:FF:000001">
    <property type="entry name" value="Signal transducer and activator of transcription"/>
    <property type="match status" value="1"/>
</dbReference>
<dbReference type="FunFam" id="2.60.40.630:FF:000004">
    <property type="entry name" value="Signal transducer and activator of transcription"/>
    <property type="match status" value="1"/>
</dbReference>
<dbReference type="FunFam" id="3.30.505.10:FF:000003">
    <property type="entry name" value="Signal transducer and activator of transcription"/>
    <property type="match status" value="1"/>
</dbReference>
<dbReference type="Gene3D" id="1.10.238.10">
    <property type="entry name" value="EF-hand"/>
    <property type="match status" value="1"/>
</dbReference>
<dbReference type="Gene3D" id="3.30.505.10">
    <property type="entry name" value="SH2 domain"/>
    <property type="match status" value="1"/>
</dbReference>
<dbReference type="Gene3D" id="1.20.1050.20">
    <property type="entry name" value="STAT transcription factor, all-alpha domain"/>
    <property type="match status" value="1"/>
</dbReference>
<dbReference type="Gene3D" id="2.60.40.630">
    <property type="entry name" value="STAT transcription factor, DNA-binding domain"/>
    <property type="match status" value="1"/>
</dbReference>
<dbReference type="Gene3D" id="1.10.532.10">
    <property type="entry name" value="STAT transcription factor, N-terminal domain"/>
    <property type="match status" value="1"/>
</dbReference>
<dbReference type="InterPro" id="IPR008967">
    <property type="entry name" value="p53-like_TF_DNA-bd_sf"/>
</dbReference>
<dbReference type="InterPro" id="IPR000980">
    <property type="entry name" value="SH2"/>
</dbReference>
<dbReference type="InterPro" id="IPR036860">
    <property type="entry name" value="SH2_dom_sf"/>
</dbReference>
<dbReference type="InterPro" id="IPR001217">
    <property type="entry name" value="STAT"/>
</dbReference>
<dbReference type="InterPro" id="IPR022756">
    <property type="entry name" value="STAT2_C"/>
</dbReference>
<dbReference type="InterPro" id="IPR035854">
    <property type="entry name" value="STAT2_SH2"/>
</dbReference>
<dbReference type="InterPro" id="IPR048988">
    <property type="entry name" value="STAT_linker"/>
</dbReference>
<dbReference type="InterPro" id="IPR036535">
    <property type="entry name" value="STAT_N_sf"/>
</dbReference>
<dbReference type="InterPro" id="IPR013800">
    <property type="entry name" value="STAT_TF_alpha"/>
</dbReference>
<dbReference type="InterPro" id="IPR015988">
    <property type="entry name" value="STAT_TF_coiled-coil"/>
</dbReference>
<dbReference type="InterPro" id="IPR013801">
    <property type="entry name" value="STAT_TF_DNA-bd"/>
</dbReference>
<dbReference type="InterPro" id="IPR012345">
    <property type="entry name" value="STAT_TF_DNA-bd_N"/>
</dbReference>
<dbReference type="InterPro" id="IPR013799">
    <property type="entry name" value="STAT_TF_prot_interaction"/>
</dbReference>
<dbReference type="PANTHER" id="PTHR11801">
    <property type="entry name" value="SIGNAL TRANSDUCER AND ACTIVATOR OF TRANSCRIPTION"/>
    <property type="match status" value="1"/>
</dbReference>
<dbReference type="Pfam" id="PF00017">
    <property type="entry name" value="SH2"/>
    <property type="match status" value="1"/>
</dbReference>
<dbReference type="Pfam" id="PF12188">
    <property type="entry name" value="STAT2_C"/>
    <property type="match status" value="1"/>
</dbReference>
<dbReference type="Pfam" id="PF01017">
    <property type="entry name" value="STAT_alpha"/>
    <property type="match status" value="1"/>
</dbReference>
<dbReference type="Pfam" id="PF02864">
    <property type="entry name" value="STAT_bind"/>
    <property type="match status" value="1"/>
</dbReference>
<dbReference type="Pfam" id="PF02865">
    <property type="entry name" value="STAT_int"/>
    <property type="match status" value="1"/>
</dbReference>
<dbReference type="Pfam" id="PF21354">
    <property type="entry name" value="STAT_linker"/>
    <property type="match status" value="1"/>
</dbReference>
<dbReference type="SMART" id="SM00964">
    <property type="entry name" value="STAT_int"/>
    <property type="match status" value="1"/>
</dbReference>
<dbReference type="SUPFAM" id="SSF49417">
    <property type="entry name" value="p53-like transcription factors"/>
    <property type="match status" value="1"/>
</dbReference>
<dbReference type="SUPFAM" id="SSF55550">
    <property type="entry name" value="SH2 domain"/>
    <property type="match status" value="1"/>
</dbReference>
<dbReference type="SUPFAM" id="SSF47655">
    <property type="entry name" value="STAT"/>
    <property type="match status" value="1"/>
</dbReference>
<dbReference type="SUPFAM" id="SSF48092">
    <property type="entry name" value="Transcription factor STAT-4 N-domain"/>
    <property type="match status" value="1"/>
</dbReference>
<dbReference type="PROSITE" id="PS50001">
    <property type="entry name" value="SH2"/>
    <property type="match status" value="1"/>
</dbReference>
<sequence>MAQWEMLQNLDSPFQDQLHQLYSESLLPVDVRQYLAVWIEDQNWQEAALGNDDSKANMLFFHFLDQLNYDCGRCGQDPECLLLQHNLRKFYRDIQAIPQGPTRLAEMIFNLLLEEKRILIQAQRAQLEQQEPALEAPGENQQHEIESRILELRAMMEKLVKSISQLKDQQDIFCFRYKIKASAKTHSLDPHRTRQEQVLQETLNELDKRRKEVLDASKALLGRLTTLIELLLPKLEEWKVQQQKACIGAPMDGELEQLEKWFTAEAKLLFHLRQLLKELKGLSSVVKYDEDLLFKGVDLLKAQVTELLQRLLHRAFIVETQPCMPQTPHRPLILKTGSKFTVRTRLLVRLQEGNESLTAEVSIDRNPPKSQGFRKFNILTSNRKTLTPEKGQSQGLIWDFGYLTLMEQRSGGAGKGNNKGPLGVTEELHIISFTVKYTYQGLKQELTTDTLPVVIISNMNQLSIAWASILWFNLLSSDPQNQQFFSSPPKAPWNLLGPALSWQFSSHVGQGLNSDQLGMLRDKLFGQNSSTEGLSLSWVDFIKRESPPGKLPFWTWLDKILDLVHDHLKDLWKDGHIMGFVSRSEERRLLKKTISGTFLLRFSETLEGGITCSWVEHQDDDKVLIYSLQPFTKEVLQSLPLTKIISQYQLLTEENIPENPLRFLYPRIPRDEAFGCYNQEKANLQERKKYLKHKLIVVSNRQVDELQQPPELKLEPDLESLELDLGLAPGPEPGVGLDLEPLLEAGLDLGPELEPMLQSTLEPVLEPILDEVLQGVPEPNLGPELKLEPILEPVSQPVPEPDLPHDLRHLNTDEMQIFRNSMRIEEIMPNGDPLLASQNTNVDEACVFHRSHFYTDGPLIPSDY</sequence>
<reference key="1">
    <citation type="submission" date="1997-05" db="EMBL/GenBank/DDBJ databases">
        <authorList>
            <person name="Ito Y."/>
            <person name="Mikawa S."/>
            <person name="Kobayashi E."/>
            <person name="Wada Y."/>
            <person name="Minezawa M."/>
        </authorList>
    </citation>
    <scope>NUCLEOTIDE SEQUENCE [MRNA]</scope>
    <source>
        <tissue>Muscle</tissue>
    </source>
</reference>
<reference key="2">
    <citation type="journal article" date="2022" name="MBio">
        <title>MGF360-9L Is a Major Virulence Factor Associated with the African Swine Fever Virus by Antagonizing the JAK/STAT Signaling Pathway.</title>
        <authorList>
            <person name="Zhang K."/>
            <person name="Yang B."/>
            <person name="Shen C."/>
            <person name="Zhang T."/>
            <person name="Hao Y."/>
            <person name="Zhang D."/>
            <person name="Liu H."/>
            <person name="Shi X."/>
            <person name="Li G."/>
            <person name="Yang J."/>
            <person name="Li D."/>
            <person name="Zhu Z."/>
            <person name="Tian H."/>
            <person name="Yang F."/>
            <person name="Ru Y."/>
            <person name="Cao W.J."/>
            <person name="Guo J."/>
            <person name="He J."/>
            <person name="Zheng H."/>
            <person name="Liu X."/>
        </authorList>
    </citation>
    <scope>INTERACTION WITH AFRICAN SWINE FEVER VIRUS PROTEIN MGF360-9L (MICROBIAL INFECTION)</scope>
</reference>
<name>STAT2_PIG</name>
<feature type="chain" id="PRO_0000182415" description="Signal transducer and activator of transcription 2">
    <location>
        <begin position="1"/>
        <end position="864"/>
    </location>
</feature>
<feature type="domain" description="SH2" evidence="3">
    <location>
        <begin position="572"/>
        <end position="667"/>
    </location>
</feature>
<feature type="modified residue" description="Phosphoserine" evidence="2">
    <location>
        <position position="283"/>
    </location>
</feature>
<feature type="modified residue" description="Phosphotyrosine; by JAK" evidence="2">
    <location>
        <position position="690"/>
    </location>
</feature>
<feature type="modified residue" description="Phosphothreonine" evidence="2">
    <location>
        <position position="812"/>
    </location>
</feature>
<protein>
    <recommendedName>
        <fullName>Signal transducer and activator of transcription 2</fullName>
    </recommendedName>
</protein>
<accession>O02799</accession>
<keyword id="KW-0010">Activator</keyword>
<keyword id="KW-0963">Cytoplasm</keyword>
<keyword id="KW-0238">DNA-binding</keyword>
<keyword id="KW-0945">Host-virus interaction</keyword>
<keyword id="KW-0539">Nucleus</keyword>
<keyword id="KW-0597">Phosphoprotein</keyword>
<keyword id="KW-1185">Reference proteome</keyword>
<keyword id="KW-0727">SH2 domain</keyword>
<keyword id="KW-0804">Transcription</keyword>
<keyword id="KW-0805">Transcription regulation</keyword>
<gene>
    <name type="primary">STAT2</name>
</gene>
<proteinExistence type="evidence at protein level"/>
<organism>
    <name type="scientific">Sus scrofa</name>
    <name type="common">Pig</name>
    <dbReference type="NCBI Taxonomy" id="9823"/>
    <lineage>
        <taxon>Eukaryota</taxon>
        <taxon>Metazoa</taxon>
        <taxon>Chordata</taxon>
        <taxon>Craniata</taxon>
        <taxon>Vertebrata</taxon>
        <taxon>Euteleostomi</taxon>
        <taxon>Mammalia</taxon>
        <taxon>Eutheria</taxon>
        <taxon>Laurasiatheria</taxon>
        <taxon>Artiodactyla</taxon>
        <taxon>Suina</taxon>
        <taxon>Suidae</taxon>
        <taxon>Sus</taxon>
    </lineage>
</organism>
<comment type="function">
    <text evidence="2">Signal transducer and activator of transcription that mediates signaling by type I IFNs (IFN-alpha and IFN-beta). Following type I IFN binding to cell surface receptors, Jak kinases (TYK2 and JAK1) are activated, leading to tyrosine phosphorylation of STAT1 and STAT2. The phosphorylated STATs dimerize, associate with IRF9/ISGF3G to form a complex termed ISGF3 transcription factor, that enters the nucleus. ISGF3 binds to the IFN stimulated response element (ISRE) to activate the transcription of interferon stimulated genes, which drive the cell in an antiviral state. Acts as a regulator of mitochondrial fission by modulating the phosphorylation of DNM1L at 'Ser-616' and 'Ser-637' which activate and inactivate the GTPase activity of DNM1L respectively.</text>
</comment>
<comment type="subunit">
    <text evidence="1">Heterodimer with STAT1 upon IFN-alpha/beta induced phosphorylation. The heterodimer STAT1:STAT2 forms the interferon-stimulated gene factor 3 complex (ISGF3) with IRF9; interacts with IRF9 in the cytoplasm. Interacts with CRSP2 and CRSP6. Can form a homodimer upon IFN-alpha induced phosphorylation. Interacts with IFNAR1; the interaction requires the phosphorylation of IFNAR1 at 'Tyr-467'. Interacts with IFNAR2. Interacts with ARL2BP (By similarity).</text>
</comment>
<comment type="subunit">
    <text evidence="4">(Microbial infection) Interacts with African swine fever virus (ASFV) MGF360-9L; this interaction mediates degradation of STAT1 through apoptosis.</text>
</comment>
<comment type="subcellular location">
    <subcellularLocation>
        <location evidence="1">Cytoplasm</location>
    </subcellularLocation>
    <subcellularLocation>
        <location evidence="1">Nucleus</location>
    </subcellularLocation>
    <text evidence="1">Translocated into the nucleus upon activation by IFN-alpha/beta.</text>
</comment>
<comment type="PTM">
    <text evidence="1">Tyrosine phosphorylated in response to IFN-alpha.</text>
</comment>
<comment type="similarity">
    <text evidence="5">Belongs to the transcription factor STAT family.</text>
</comment>